<organism>
    <name type="scientific">Gulo gulo</name>
    <name type="common">Wolverine</name>
    <name type="synonym">Gluton</name>
    <dbReference type="NCBI Taxonomy" id="48420"/>
    <lineage>
        <taxon>Eukaryota</taxon>
        <taxon>Metazoa</taxon>
        <taxon>Chordata</taxon>
        <taxon>Craniata</taxon>
        <taxon>Vertebrata</taxon>
        <taxon>Euteleostomi</taxon>
        <taxon>Mammalia</taxon>
        <taxon>Eutheria</taxon>
        <taxon>Laurasiatheria</taxon>
        <taxon>Carnivora</taxon>
        <taxon>Caniformia</taxon>
        <taxon>Musteloidea</taxon>
        <taxon>Mustelidae</taxon>
        <taxon>Guloninae</taxon>
        <taxon>Gulo</taxon>
    </lineage>
</organism>
<reference key="1">
    <citation type="journal article" date="1996" name="J. Mol. Evol.">
        <title>Phylogenetic analyses of complete cytochrome b genes of the order carnivora with particular emphasis on the caniformia.</title>
        <authorList>
            <person name="Ledje C."/>
            <person name="Arnason U."/>
        </authorList>
    </citation>
    <scope>NUCLEOTIDE SEQUENCE [GENOMIC DNA]</scope>
</reference>
<dbReference type="EMBL" id="X94921">
    <property type="status" value="NOT_ANNOTATED_CDS"/>
    <property type="molecule type" value="Genomic_DNA"/>
</dbReference>
<dbReference type="RefSeq" id="YP_001382271.1">
    <property type="nucleotide sequence ID" value="NC_009685.1"/>
</dbReference>
<dbReference type="SMR" id="P56697"/>
<dbReference type="GeneID" id="5333340"/>
<dbReference type="CTD" id="4519"/>
<dbReference type="GO" id="GO:0005743">
    <property type="term" value="C:mitochondrial inner membrane"/>
    <property type="evidence" value="ECO:0007669"/>
    <property type="project" value="UniProtKB-SubCell"/>
</dbReference>
<dbReference type="GO" id="GO:0045275">
    <property type="term" value="C:respiratory chain complex III"/>
    <property type="evidence" value="ECO:0007669"/>
    <property type="project" value="InterPro"/>
</dbReference>
<dbReference type="GO" id="GO:0046872">
    <property type="term" value="F:metal ion binding"/>
    <property type="evidence" value="ECO:0007669"/>
    <property type="project" value="UniProtKB-KW"/>
</dbReference>
<dbReference type="GO" id="GO:0008121">
    <property type="term" value="F:ubiquinol-cytochrome-c reductase activity"/>
    <property type="evidence" value="ECO:0007669"/>
    <property type="project" value="InterPro"/>
</dbReference>
<dbReference type="GO" id="GO:0006122">
    <property type="term" value="P:mitochondrial electron transport, ubiquinol to cytochrome c"/>
    <property type="evidence" value="ECO:0007669"/>
    <property type="project" value="TreeGrafter"/>
</dbReference>
<dbReference type="CDD" id="cd00290">
    <property type="entry name" value="cytochrome_b_C"/>
    <property type="match status" value="1"/>
</dbReference>
<dbReference type="CDD" id="cd00284">
    <property type="entry name" value="Cytochrome_b_N"/>
    <property type="match status" value="1"/>
</dbReference>
<dbReference type="FunFam" id="1.20.810.10:FF:000002">
    <property type="entry name" value="Cytochrome b"/>
    <property type="match status" value="1"/>
</dbReference>
<dbReference type="Gene3D" id="1.20.810.10">
    <property type="entry name" value="Cytochrome Bc1 Complex, Chain C"/>
    <property type="match status" value="1"/>
</dbReference>
<dbReference type="InterPro" id="IPR005798">
    <property type="entry name" value="Cyt_b/b6_C"/>
</dbReference>
<dbReference type="InterPro" id="IPR036150">
    <property type="entry name" value="Cyt_b/b6_C_sf"/>
</dbReference>
<dbReference type="InterPro" id="IPR005797">
    <property type="entry name" value="Cyt_b/b6_N"/>
</dbReference>
<dbReference type="InterPro" id="IPR027387">
    <property type="entry name" value="Cytb/b6-like_sf"/>
</dbReference>
<dbReference type="InterPro" id="IPR030689">
    <property type="entry name" value="Cytochrome_b"/>
</dbReference>
<dbReference type="InterPro" id="IPR048260">
    <property type="entry name" value="Cytochrome_b_C_euk/bac"/>
</dbReference>
<dbReference type="InterPro" id="IPR048259">
    <property type="entry name" value="Cytochrome_b_N_euk/bac"/>
</dbReference>
<dbReference type="InterPro" id="IPR016174">
    <property type="entry name" value="Di-haem_cyt_TM"/>
</dbReference>
<dbReference type="PANTHER" id="PTHR19271">
    <property type="entry name" value="CYTOCHROME B"/>
    <property type="match status" value="1"/>
</dbReference>
<dbReference type="PANTHER" id="PTHR19271:SF16">
    <property type="entry name" value="CYTOCHROME B"/>
    <property type="match status" value="1"/>
</dbReference>
<dbReference type="Pfam" id="PF00032">
    <property type="entry name" value="Cytochrom_B_C"/>
    <property type="match status" value="1"/>
</dbReference>
<dbReference type="Pfam" id="PF00033">
    <property type="entry name" value="Cytochrome_B"/>
    <property type="match status" value="1"/>
</dbReference>
<dbReference type="PIRSF" id="PIRSF038885">
    <property type="entry name" value="COB"/>
    <property type="match status" value="1"/>
</dbReference>
<dbReference type="SUPFAM" id="SSF81648">
    <property type="entry name" value="a domain/subunit of cytochrome bc1 complex (Ubiquinol-cytochrome c reductase)"/>
    <property type="match status" value="1"/>
</dbReference>
<dbReference type="SUPFAM" id="SSF81342">
    <property type="entry name" value="Transmembrane di-heme cytochromes"/>
    <property type="match status" value="1"/>
</dbReference>
<dbReference type="PROSITE" id="PS51003">
    <property type="entry name" value="CYTB_CTER"/>
    <property type="match status" value="1"/>
</dbReference>
<dbReference type="PROSITE" id="PS51002">
    <property type="entry name" value="CYTB_NTER"/>
    <property type="match status" value="1"/>
</dbReference>
<gene>
    <name type="primary">MT-CYB</name>
    <name type="synonym">COB</name>
    <name type="synonym">CYTB</name>
    <name type="synonym">MTCYB</name>
</gene>
<proteinExistence type="inferred from homology"/>
<protein>
    <recommendedName>
        <fullName>Cytochrome b</fullName>
    </recommendedName>
    <alternativeName>
        <fullName>Complex III subunit 3</fullName>
    </alternativeName>
    <alternativeName>
        <fullName>Complex III subunit III</fullName>
    </alternativeName>
    <alternativeName>
        <fullName>Cytochrome b-c1 complex subunit 3</fullName>
    </alternativeName>
    <alternativeName>
        <fullName>Ubiquinol-cytochrome-c reductase complex cytochrome b subunit</fullName>
    </alternativeName>
</protein>
<evidence type="ECO:0000250" key="1"/>
<evidence type="ECO:0000250" key="2">
    <source>
        <dbReference type="UniProtKB" id="P00157"/>
    </source>
</evidence>
<evidence type="ECO:0000255" key="3">
    <source>
        <dbReference type="PROSITE-ProRule" id="PRU00967"/>
    </source>
</evidence>
<evidence type="ECO:0000255" key="4">
    <source>
        <dbReference type="PROSITE-ProRule" id="PRU00968"/>
    </source>
</evidence>
<feature type="chain" id="PRO_0000061017" description="Cytochrome b">
    <location>
        <begin position="1"/>
        <end position="379"/>
    </location>
</feature>
<feature type="transmembrane region" description="Helical" evidence="2">
    <location>
        <begin position="33"/>
        <end position="53"/>
    </location>
</feature>
<feature type="transmembrane region" description="Helical" evidence="2">
    <location>
        <begin position="77"/>
        <end position="98"/>
    </location>
</feature>
<feature type="transmembrane region" description="Helical" evidence="2">
    <location>
        <begin position="113"/>
        <end position="133"/>
    </location>
</feature>
<feature type="transmembrane region" description="Helical" evidence="2">
    <location>
        <begin position="178"/>
        <end position="198"/>
    </location>
</feature>
<feature type="transmembrane region" description="Helical" evidence="2">
    <location>
        <begin position="226"/>
        <end position="246"/>
    </location>
</feature>
<feature type="transmembrane region" description="Helical" evidence="2">
    <location>
        <begin position="288"/>
        <end position="308"/>
    </location>
</feature>
<feature type="transmembrane region" description="Helical" evidence="2">
    <location>
        <begin position="320"/>
        <end position="340"/>
    </location>
</feature>
<feature type="transmembrane region" description="Helical" evidence="2">
    <location>
        <begin position="347"/>
        <end position="367"/>
    </location>
</feature>
<feature type="binding site" description="axial binding residue" evidence="2">
    <location>
        <position position="83"/>
    </location>
    <ligand>
        <name>heme b</name>
        <dbReference type="ChEBI" id="CHEBI:60344"/>
        <label>b562</label>
    </ligand>
    <ligandPart>
        <name>Fe</name>
        <dbReference type="ChEBI" id="CHEBI:18248"/>
    </ligandPart>
</feature>
<feature type="binding site" description="axial binding residue" evidence="2">
    <location>
        <position position="97"/>
    </location>
    <ligand>
        <name>heme b</name>
        <dbReference type="ChEBI" id="CHEBI:60344"/>
        <label>b566</label>
    </ligand>
    <ligandPart>
        <name>Fe</name>
        <dbReference type="ChEBI" id="CHEBI:18248"/>
    </ligandPart>
</feature>
<feature type="binding site" description="axial binding residue" evidence="2">
    <location>
        <position position="182"/>
    </location>
    <ligand>
        <name>heme b</name>
        <dbReference type="ChEBI" id="CHEBI:60344"/>
        <label>b562</label>
    </ligand>
    <ligandPart>
        <name>Fe</name>
        <dbReference type="ChEBI" id="CHEBI:18248"/>
    </ligandPart>
</feature>
<feature type="binding site" description="axial binding residue" evidence="2">
    <location>
        <position position="196"/>
    </location>
    <ligand>
        <name>heme b</name>
        <dbReference type="ChEBI" id="CHEBI:60344"/>
        <label>b566</label>
    </ligand>
    <ligandPart>
        <name>Fe</name>
        <dbReference type="ChEBI" id="CHEBI:18248"/>
    </ligandPart>
</feature>
<feature type="binding site" evidence="2">
    <location>
        <position position="201"/>
    </location>
    <ligand>
        <name>a ubiquinone</name>
        <dbReference type="ChEBI" id="CHEBI:16389"/>
    </ligand>
</feature>
<name>CYB_GULGU</name>
<keyword id="KW-0249">Electron transport</keyword>
<keyword id="KW-0349">Heme</keyword>
<keyword id="KW-0408">Iron</keyword>
<keyword id="KW-0472">Membrane</keyword>
<keyword id="KW-0479">Metal-binding</keyword>
<keyword id="KW-0496">Mitochondrion</keyword>
<keyword id="KW-0999">Mitochondrion inner membrane</keyword>
<keyword id="KW-0679">Respiratory chain</keyword>
<keyword id="KW-0812">Transmembrane</keyword>
<keyword id="KW-1133">Transmembrane helix</keyword>
<keyword id="KW-0813">Transport</keyword>
<keyword id="KW-0830">Ubiquinone</keyword>
<accession>P56697</accession>
<geneLocation type="mitochondrion"/>
<sequence>MTNIRKTHPLAKIINNSFIDLPTPSNISAWWNFGSLLGICLILQILTGLFLAMHYTSDTATAFSSVTHICRDVNYGWVIRYMHANGASMFFICLFLHVGRGLYYGSYTYSETWNIGIILLFTVMATAFMGYVLPWGQMSFWGATVITNLLSAIPYIGTSLVEWIWGGFSVDKATLTRFFAFHFILPFIILALAAIHLLFLHETGSNNPSGIPSDSDKIPFHPYYTIKDILGALFLALVLMMLVLFSPDLLGDPDNYTPANPLNTPPHIKPEWYFLFAYAILRSIPNKLGGVLALVLSILVLAIIPLLHTSKQRGMMFRPLSQCLFWLLVADLLTLTWIGGQPVEHPFITIGQLASILYFAILLIFMPVASIVENNLLKW</sequence>
<comment type="function">
    <text evidence="2">Component of the ubiquinol-cytochrome c reductase complex (complex III or cytochrome b-c1 complex) that is part of the mitochondrial respiratory chain. The b-c1 complex mediates electron transfer from ubiquinol to cytochrome c. Contributes to the generation of a proton gradient across the mitochondrial membrane that is then used for ATP synthesis.</text>
</comment>
<comment type="cofactor">
    <cofactor evidence="2">
        <name>heme b</name>
        <dbReference type="ChEBI" id="CHEBI:60344"/>
    </cofactor>
    <text evidence="2">Binds 2 heme b groups non-covalently.</text>
</comment>
<comment type="subunit">
    <text evidence="2">The cytochrome bc1 complex contains 11 subunits: 3 respiratory subunits (MT-CYB, CYC1 and UQCRFS1), 2 core proteins (UQCRC1 and UQCRC2) and 6 low-molecular weight proteins (UQCRH/QCR6, UQCRB/QCR7, UQCRQ/QCR8, UQCR10/QCR9, UQCR11/QCR10 and a cleavage product of UQCRFS1). This cytochrome bc1 complex then forms a dimer.</text>
</comment>
<comment type="subcellular location">
    <subcellularLocation>
        <location evidence="2">Mitochondrion inner membrane</location>
        <topology evidence="2">Multi-pass membrane protein</topology>
    </subcellularLocation>
</comment>
<comment type="miscellaneous">
    <text evidence="1">Heme 1 (or BL or b562) is low-potential and absorbs at about 562 nm, and heme 2 (or BH or b566) is high-potential and absorbs at about 566 nm.</text>
</comment>
<comment type="similarity">
    <text evidence="3 4">Belongs to the cytochrome b family.</text>
</comment>
<comment type="caution">
    <text evidence="2">The full-length protein contains only eight transmembrane helices, not nine as predicted by bioinformatics tools.</text>
</comment>